<evidence type="ECO:0000255" key="1">
    <source>
        <dbReference type="HAMAP-Rule" id="MF_00382"/>
    </source>
</evidence>
<evidence type="ECO:0000305" key="2"/>
<proteinExistence type="inferred from homology"/>
<protein>
    <recommendedName>
        <fullName evidence="1">Large ribosomal subunit protein bL20</fullName>
    </recommendedName>
    <alternativeName>
        <fullName evidence="2">50S ribosomal protein L20</fullName>
    </alternativeName>
</protein>
<comment type="function">
    <text evidence="1">Binds directly to 23S ribosomal RNA and is necessary for the in vitro assembly process of the 50S ribosomal subunit. It is not involved in the protein synthesizing functions of that subunit.</text>
</comment>
<comment type="similarity">
    <text evidence="1">Belongs to the bacterial ribosomal protein bL20 family.</text>
</comment>
<feature type="chain" id="PRO_0000243744" description="Large ribosomal subunit protein bL20">
    <location>
        <begin position="1"/>
        <end position="119"/>
    </location>
</feature>
<sequence length="119" mass="13633">MARVKGGVVSRKRRKRVLKLAKGYYGAKHILFRTAKEQVMNSYYYAYRDRRQKKRDFRKLWITRINAAARLNGLSYSQLMHGLKLAEIEVNRKMLADLAVNDAAAFTALADAAKAKLGK</sequence>
<organism>
    <name type="scientific">Streptococcus thermophilus (strain CNRZ 1066)</name>
    <dbReference type="NCBI Taxonomy" id="299768"/>
    <lineage>
        <taxon>Bacteria</taxon>
        <taxon>Bacillati</taxon>
        <taxon>Bacillota</taxon>
        <taxon>Bacilli</taxon>
        <taxon>Lactobacillales</taxon>
        <taxon>Streptococcaceae</taxon>
        <taxon>Streptococcus</taxon>
    </lineage>
</organism>
<keyword id="KW-0687">Ribonucleoprotein</keyword>
<keyword id="KW-0689">Ribosomal protein</keyword>
<keyword id="KW-0694">RNA-binding</keyword>
<keyword id="KW-0699">rRNA-binding</keyword>
<name>RL20_STRT1</name>
<gene>
    <name evidence="1" type="primary">rplT</name>
    <name type="ordered locus">str1132</name>
</gene>
<reference key="1">
    <citation type="journal article" date="2004" name="Nat. Biotechnol.">
        <title>Complete sequence and comparative genome analysis of the dairy bacterium Streptococcus thermophilus.</title>
        <authorList>
            <person name="Bolotin A."/>
            <person name="Quinquis B."/>
            <person name="Renault P."/>
            <person name="Sorokin A."/>
            <person name="Ehrlich S.D."/>
            <person name="Kulakauskas S."/>
            <person name="Lapidus A."/>
            <person name="Goltsman E."/>
            <person name="Mazur M."/>
            <person name="Pusch G.D."/>
            <person name="Fonstein M."/>
            <person name="Overbeek R."/>
            <person name="Kyprides N."/>
            <person name="Purnelle B."/>
            <person name="Prozzi D."/>
            <person name="Ngui K."/>
            <person name="Masuy D."/>
            <person name="Hancy F."/>
            <person name="Burteau S."/>
            <person name="Boutry M."/>
            <person name="Delcour J."/>
            <person name="Goffeau A."/>
            <person name="Hols P."/>
        </authorList>
    </citation>
    <scope>NUCLEOTIDE SEQUENCE [LARGE SCALE GENOMIC DNA]</scope>
    <source>
        <strain>CNRZ 1066</strain>
    </source>
</reference>
<accession>Q5LZL9</accession>
<dbReference type="EMBL" id="CP000024">
    <property type="protein sequence ID" value="AAV62680.1"/>
    <property type="molecule type" value="Genomic_DNA"/>
</dbReference>
<dbReference type="RefSeq" id="WP_002885090.1">
    <property type="nucleotide sequence ID" value="NC_006449.1"/>
</dbReference>
<dbReference type="SMR" id="Q5LZL9"/>
<dbReference type="GeneID" id="93792170"/>
<dbReference type="KEGG" id="stc:str1132"/>
<dbReference type="HOGENOM" id="CLU_123265_0_1_9"/>
<dbReference type="GO" id="GO:1990904">
    <property type="term" value="C:ribonucleoprotein complex"/>
    <property type="evidence" value="ECO:0007669"/>
    <property type="project" value="UniProtKB-KW"/>
</dbReference>
<dbReference type="GO" id="GO:0005840">
    <property type="term" value="C:ribosome"/>
    <property type="evidence" value="ECO:0007669"/>
    <property type="project" value="UniProtKB-KW"/>
</dbReference>
<dbReference type="GO" id="GO:0019843">
    <property type="term" value="F:rRNA binding"/>
    <property type="evidence" value="ECO:0007669"/>
    <property type="project" value="UniProtKB-UniRule"/>
</dbReference>
<dbReference type="GO" id="GO:0003735">
    <property type="term" value="F:structural constituent of ribosome"/>
    <property type="evidence" value="ECO:0007669"/>
    <property type="project" value="InterPro"/>
</dbReference>
<dbReference type="GO" id="GO:0000027">
    <property type="term" value="P:ribosomal large subunit assembly"/>
    <property type="evidence" value="ECO:0007669"/>
    <property type="project" value="UniProtKB-UniRule"/>
</dbReference>
<dbReference type="GO" id="GO:0006412">
    <property type="term" value="P:translation"/>
    <property type="evidence" value="ECO:0007669"/>
    <property type="project" value="InterPro"/>
</dbReference>
<dbReference type="CDD" id="cd07026">
    <property type="entry name" value="Ribosomal_L20"/>
    <property type="match status" value="1"/>
</dbReference>
<dbReference type="FunFam" id="1.10.1900.20:FF:000001">
    <property type="entry name" value="50S ribosomal protein L20"/>
    <property type="match status" value="1"/>
</dbReference>
<dbReference type="Gene3D" id="6.10.160.10">
    <property type="match status" value="1"/>
</dbReference>
<dbReference type="Gene3D" id="1.10.1900.20">
    <property type="entry name" value="Ribosomal protein L20"/>
    <property type="match status" value="1"/>
</dbReference>
<dbReference type="HAMAP" id="MF_00382">
    <property type="entry name" value="Ribosomal_bL20"/>
    <property type="match status" value="1"/>
</dbReference>
<dbReference type="InterPro" id="IPR005813">
    <property type="entry name" value="Ribosomal_bL20"/>
</dbReference>
<dbReference type="InterPro" id="IPR049946">
    <property type="entry name" value="RIBOSOMAL_L20_CS"/>
</dbReference>
<dbReference type="InterPro" id="IPR035566">
    <property type="entry name" value="Ribosomal_protein_bL20_C"/>
</dbReference>
<dbReference type="NCBIfam" id="TIGR01032">
    <property type="entry name" value="rplT_bact"/>
    <property type="match status" value="1"/>
</dbReference>
<dbReference type="PANTHER" id="PTHR10986">
    <property type="entry name" value="39S RIBOSOMAL PROTEIN L20"/>
    <property type="match status" value="1"/>
</dbReference>
<dbReference type="Pfam" id="PF00453">
    <property type="entry name" value="Ribosomal_L20"/>
    <property type="match status" value="1"/>
</dbReference>
<dbReference type="PRINTS" id="PR00062">
    <property type="entry name" value="RIBOSOMALL20"/>
</dbReference>
<dbReference type="SUPFAM" id="SSF74731">
    <property type="entry name" value="Ribosomal protein L20"/>
    <property type="match status" value="1"/>
</dbReference>
<dbReference type="PROSITE" id="PS00937">
    <property type="entry name" value="RIBOSOMAL_L20"/>
    <property type="match status" value="1"/>
</dbReference>